<dbReference type="EMBL" id="CP000627">
    <property type="protein sequence ID" value="ABQ20812.1"/>
    <property type="molecule type" value="Genomic_DNA"/>
</dbReference>
<dbReference type="EMBL" id="CP001235">
    <property type="protein sequence ID" value="ACP09152.1"/>
    <property type="molecule type" value="Genomic_DNA"/>
</dbReference>
<dbReference type="RefSeq" id="WP_001262240.1">
    <property type="nucleotide sequence ID" value="NZ_JAACZH010000005.1"/>
</dbReference>
<dbReference type="SMR" id="A5F2F1"/>
<dbReference type="GeneID" id="69720182"/>
<dbReference type="KEGG" id="vco:VC0395_A0645"/>
<dbReference type="KEGG" id="vcr:VC395_1142"/>
<dbReference type="PATRIC" id="fig|345073.21.peg.1109"/>
<dbReference type="eggNOG" id="COG2915">
    <property type="taxonomic scope" value="Bacteria"/>
</dbReference>
<dbReference type="HOGENOM" id="CLU_098920_0_0_6"/>
<dbReference type="OrthoDB" id="9788031at2"/>
<dbReference type="Proteomes" id="UP000000249">
    <property type="component" value="Chromosome 2"/>
</dbReference>
<dbReference type="GO" id="GO:0005737">
    <property type="term" value="C:cytoplasm"/>
    <property type="evidence" value="ECO:0007669"/>
    <property type="project" value="UniProtKB-SubCell"/>
</dbReference>
<dbReference type="GO" id="GO:0005886">
    <property type="term" value="C:plasma membrane"/>
    <property type="evidence" value="ECO:0007669"/>
    <property type="project" value="UniProtKB-SubCell"/>
</dbReference>
<dbReference type="FunFam" id="1.10.3890.10:FF:000001">
    <property type="entry name" value="High frequency lysogenization protein HflD homolog"/>
    <property type="match status" value="1"/>
</dbReference>
<dbReference type="Gene3D" id="1.10.3890.10">
    <property type="entry name" value="HflD-like"/>
    <property type="match status" value="1"/>
</dbReference>
<dbReference type="HAMAP" id="MF_00695">
    <property type="entry name" value="HflD_protein"/>
    <property type="match status" value="1"/>
</dbReference>
<dbReference type="InterPro" id="IPR007451">
    <property type="entry name" value="HflD"/>
</dbReference>
<dbReference type="InterPro" id="IPR035932">
    <property type="entry name" value="HflD-like_sf"/>
</dbReference>
<dbReference type="NCBIfam" id="NF001246">
    <property type="entry name" value="PRK00218.1-2"/>
    <property type="match status" value="1"/>
</dbReference>
<dbReference type="NCBIfam" id="NF001248">
    <property type="entry name" value="PRK00218.1-4"/>
    <property type="match status" value="1"/>
</dbReference>
<dbReference type="PANTHER" id="PTHR38100">
    <property type="entry name" value="HIGH FREQUENCY LYSOGENIZATION PROTEIN HFLD"/>
    <property type="match status" value="1"/>
</dbReference>
<dbReference type="PANTHER" id="PTHR38100:SF1">
    <property type="entry name" value="HIGH FREQUENCY LYSOGENIZATION PROTEIN HFLD"/>
    <property type="match status" value="1"/>
</dbReference>
<dbReference type="Pfam" id="PF04356">
    <property type="entry name" value="DUF489"/>
    <property type="match status" value="1"/>
</dbReference>
<dbReference type="SUPFAM" id="SSF101322">
    <property type="entry name" value="YcfC-like"/>
    <property type="match status" value="1"/>
</dbReference>
<evidence type="ECO:0000255" key="1">
    <source>
        <dbReference type="HAMAP-Rule" id="MF_00695"/>
    </source>
</evidence>
<comment type="subcellular location">
    <subcellularLocation>
        <location>Cytoplasm</location>
    </subcellularLocation>
    <subcellularLocation>
        <location evidence="1">Cell inner membrane</location>
        <topology evidence="1">Peripheral membrane protein</topology>
        <orientation evidence="1">Cytoplasmic side</orientation>
    </subcellularLocation>
</comment>
<comment type="similarity">
    <text evidence="1">Belongs to the HflD family.</text>
</comment>
<organism>
    <name type="scientific">Vibrio cholerae serotype O1 (strain ATCC 39541 / Classical Ogawa 395 / O395)</name>
    <dbReference type="NCBI Taxonomy" id="345073"/>
    <lineage>
        <taxon>Bacteria</taxon>
        <taxon>Pseudomonadati</taxon>
        <taxon>Pseudomonadota</taxon>
        <taxon>Gammaproteobacteria</taxon>
        <taxon>Vibrionales</taxon>
        <taxon>Vibrionaceae</taxon>
        <taxon>Vibrio</taxon>
    </lineage>
</organism>
<keyword id="KW-0997">Cell inner membrane</keyword>
<keyword id="KW-1003">Cell membrane</keyword>
<keyword id="KW-0963">Cytoplasm</keyword>
<keyword id="KW-0472">Membrane</keyword>
<feature type="chain" id="PRO_1000072760" description="High frequency lysogenization protein HflD homolog">
    <location>
        <begin position="1"/>
        <end position="205"/>
    </location>
</feature>
<proteinExistence type="inferred from homology"/>
<gene>
    <name evidence="1" type="primary">hflD</name>
    <name type="ordered locus">VC0395_A0645</name>
    <name type="ordered locus">VC395_1142</name>
</gene>
<sequence>MANAIYDRTIAFAGICQAVALVQQVAKNGYCDSDAFETSLKAITCTNPSNTLEVFGHESQLKLGLECLVKGIDSTPSGSEITRYLISLMALERKLSGRRDAMSQLGDRIQMIERQLDHFDLFDDQMISNLASIYLDVISPIGPRIQVTGTPAVLQQTANQHKVRALLLSGIRCAVLWRQVGGRRRHLIFGRKKMIEQAQILLARI</sequence>
<reference key="1">
    <citation type="submission" date="2007-03" db="EMBL/GenBank/DDBJ databases">
        <authorList>
            <person name="Heidelberg J."/>
        </authorList>
    </citation>
    <scope>NUCLEOTIDE SEQUENCE [LARGE SCALE GENOMIC DNA]</scope>
    <source>
        <strain>ATCC 39541 / Classical Ogawa 395 / O395</strain>
    </source>
</reference>
<reference key="2">
    <citation type="journal article" date="2008" name="PLoS ONE">
        <title>A recalibrated molecular clock and independent origins for the cholera pandemic clones.</title>
        <authorList>
            <person name="Feng L."/>
            <person name="Reeves P.R."/>
            <person name="Lan R."/>
            <person name="Ren Y."/>
            <person name="Gao C."/>
            <person name="Zhou Z."/>
            <person name="Ren Y."/>
            <person name="Cheng J."/>
            <person name="Wang W."/>
            <person name="Wang J."/>
            <person name="Qian W."/>
            <person name="Li D."/>
            <person name="Wang L."/>
        </authorList>
    </citation>
    <scope>NUCLEOTIDE SEQUENCE [LARGE SCALE GENOMIC DNA]</scope>
    <source>
        <strain>ATCC 39541 / Classical Ogawa 395 / O395</strain>
    </source>
</reference>
<name>HFLD_VIBC3</name>
<accession>A5F2F1</accession>
<accession>C3LZD6</accession>
<protein>
    <recommendedName>
        <fullName evidence="1">High frequency lysogenization protein HflD homolog</fullName>
    </recommendedName>
</protein>